<reference key="1">
    <citation type="journal article" date="1999" name="Nature">
        <title>Sequence and analysis of chromosome 4 of the plant Arabidopsis thaliana.</title>
        <authorList>
            <person name="Mayer K.F.X."/>
            <person name="Schueller C."/>
            <person name="Wambutt R."/>
            <person name="Murphy G."/>
            <person name="Volckaert G."/>
            <person name="Pohl T."/>
            <person name="Duesterhoeft A."/>
            <person name="Stiekema W."/>
            <person name="Entian K.-D."/>
            <person name="Terryn N."/>
            <person name="Harris B."/>
            <person name="Ansorge W."/>
            <person name="Brandt P."/>
            <person name="Grivell L.A."/>
            <person name="Rieger M."/>
            <person name="Weichselgartner M."/>
            <person name="de Simone V."/>
            <person name="Obermaier B."/>
            <person name="Mache R."/>
            <person name="Mueller M."/>
            <person name="Kreis M."/>
            <person name="Delseny M."/>
            <person name="Puigdomenech P."/>
            <person name="Watson M."/>
            <person name="Schmidtheini T."/>
            <person name="Reichert B."/>
            <person name="Portetelle D."/>
            <person name="Perez-Alonso M."/>
            <person name="Boutry M."/>
            <person name="Bancroft I."/>
            <person name="Vos P."/>
            <person name="Hoheisel J."/>
            <person name="Zimmermann W."/>
            <person name="Wedler H."/>
            <person name="Ridley P."/>
            <person name="Langham S.-A."/>
            <person name="McCullagh B."/>
            <person name="Bilham L."/>
            <person name="Robben J."/>
            <person name="van der Schueren J."/>
            <person name="Grymonprez B."/>
            <person name="Chuang Y.-J."/>
            <person name="Vandenbussche F."/>
            <person name="Braeken M."/>
            <person name="Weltjens I."/>
            <person name="Voet M."/>
            <person name="Bastiaens I."/>
            <person name="Aert R."/>
            <person name="Defoor E."/>
            <person name="Weitzenegger T."/>
            <person name="Bothe G."/>
            <person name="Ramsperger U."/>
            <person name="Hilbert H."/>
            <person name="Braun M."/>
            <person name="Holzer E."/>
            <person name="Brandt A."/>
            <person name="Peters S."/>
            <person name="van Staveren M."/>
            <person name="Dirkse W."/>
            <person name="Mooijman P."/>
            <person name="Klein Lankhorst R."/>
            <person name="Rose M."/>
            <person name="Hauf J."/>
            <person name="Koetter P."/>
            <person name="Berneiser S."/>
            <person name="Hempel S."/>
            <person name="Feldpausch M."/>
            <person name="Lamberth S."/>
            <person name="Van den Daele H."/>
            <person name="De Keyser A."/>
            <person name="Buysshaert C."/>
            <person name="Gielen J."/>
            <person name="Villarroel R."/>
            <person name="De Clercq R."/>
            <person name="van Montagu M."/>
            <person name="Rogers J."/>
            <person name="Cronin A."/>
            <person name="Quail M.A."/>
            <person name="Bray-Allen S."/>
            <person name="Clark L."/>
            <person name="Doggett J."/>
            <person name="Hall S."/>
            <person name="Kay M."/>
            <person name="Lennard N."/>
            <person name="McLay K."/>
            <person name="Mayes R."/>
            <person name="Pettett A."/>
            <person name="Rajandream M.A."/>
            <person name="Lyne M."/>
            <person name="Benes V."/>
            <person name="Rechmann S."/>
            <person name="Borkova D."/>
            <person name="Bloecker H."/>
            <person name="Scharfe M."/>
            <person name="Grimm M."/>
            <person name="Loehnert T.-H."/>
            <person name="Dose S."/>
            <person name="de Haan M."/>
            <person name="Maarse A.C."/>
            <person name="Schaefer M."/>
            <person name="Mueller-Auer S."/>
            <person name="Gabel C."/>
            <person name="Fuchs M."/>
            <person name="Fartmann B."/>
            <person name="Granderath K."/>
            <person name="Dauner D."/>
            <person name="Herzl A."/>
            <person name="Neumann S."/>
            <person name="Argiriou A."/>
            <person name="Vitale D."/>
            <person name="Liguori R."/>
            <person name="Piravandi E."/>
            <person name="Massenet O."/>
            <person name="Quigley F."/>
            <person name="Clabauld G."/>
            <person name="Muendlein A."/>
            <person name="Felber R."/>
            <person name="Schnabl S."/>
            <person name="Hiller R."/>
            <person name="Schmidt W."/>
            <person name="Lecharny A."/>
            <person name="Aubourg S."/>
            <person name="Chefdor F."/>
            <person name="Cooke R."/>
            <person name="Berger C."/>
            <person name="Monfort A."/>
            <person name="Casacuberta E."/>
            <person name="Gibbons T."/>
            <person name="Weber N."/>
            <person name="Vandenbol M."/>
            <person name="Bargues M."/>
            <person name="Terol J."/>
            <person name="Torres A."/>
            <person name="Perez-Perez A."/>
            <person name="Purnelle B."/>
            <person name="Bent E."/>
            <person name="Johnson S."/>
            <person name="Tacon D."/>
            <person name="Jesse T."/>
            <person name="Heijnen L."/>
            <person name="Schwarz S."/>
            <person name="Scholler P."/>
            <person name="Heber S."/>
            <person name="Francs P."/>
            <person name="Bielke C."/>
            <person name="Frishman D."/>
            <person name="Haase D."/>
            <person name="Lemcke K."/>
            <person name="Mewes H.-W."/>
            <person name="Stocker S."/>
            <person name="Zaccaria P."/>
            <person name="Bevan M."/>
            <person name="Wilson R.K."/>
            <person name="de la Bastide M."/>
            <person name="Habermann K."/>
            <person name="Parnell L."/>
            <person name="Dedhia N."/>
            <person name="Gnoj L."/>
            <person name="Schutz K."/>
            <person name="Huang E."/>
            <person name="Spiegel L."/>
            <person name="Sekhon M."/>
            <person name="Murray J."/>
            <person name="Sheet P."/>
            <person name="Cordes M."/>
            <person name="Abu-Threideh J."/>
            <person name="Stoneking T."/>
            <person name="Kalicki J."/>
            <person name="Graves T."/>
            <person name="Harmon G."/>
            <person name="Edwards J."/>
            <person name="Latreille P."/>
            <person name="Courtney L."/>
            <person name="Cloud J."/>
            <person name="Abbott A."/>
            <person name="Scott K."/>
            <person name="Johnson D."/>
            <person name="Minx P."/>
            <person name="Bentley D."/>
            <person name="Fulton B."/>
            <person name="Miller N."/>
            <person name="Greco T."/>
            <person name="Kemp K."/>
            <person name="Kramer J."/>
            <person name="Fulton L."/>
            <person name="Mardis E."/>
            <person name="Dante M."/>
            <person name="Pepin K."/>
            <person name="Hillier L.W."/>
            <person name="Nelson J."/>
            <person name="Spieth J."/>
            <person name="Ryan E."/>
            <person name="Andrews S."/>
            <person name="Geisel C."/>
            <person name="Layman D."/>
            <person name="Du H."/>
            <person name="Ali J."/>
            <person name="Berghoff A."/>
            <person name="Jones K."/>
            <person name="Drone K."/>
            <person name="Cotton M."/>
            <person name="Joshu C."/>
            <person name="Antonoiu B."/>
            <person name="Zidanic M."/>
            <person name="Strong C."/>
            <person name="Sun H."/>
            <person name="Lamar B."/>
            <person name="Yordan C."/>
            <person name="Ma P."/>
            <person name="Zhong J."/>
            <person name="Preston R."/>
            <person name="Vil D."/>
            <person name="Shekher M."/>
            <person name="Matero A."/>
            <person name="Shah R."/>
            <person name="Swaby I.K."/>
            <person name="O'Shaughnessy A."/>
            <person name="Rodriguez M."/>
            <person name="Hoffman J."/>
            <person name="Till S."/>
            <person name="Granat S."/>
            <person name="Shohdy N."/>
            <person name="Hasegawa A."/>
            <person name="Hameed A."/>
            <person name="Lodhi M."/>
            <person name="Johnson A."/>
            <person name="Chen E."/>
            <person name="Marra M.A."/>
            <person name="Martienssen R."/>
            <person name="McCombie W.R."/>
        </authorList>
    </citation>
    <scope>NUCLEOTIDE SEQUENCE [LARGE SCALE GENOMIC DNA]</scope>
    <source>
        <strain>cv. Columbia</strain>
    </source>
</reference>
<reference key="2">
    <citation type="journal article" date="2017" name="Plant J.">
        <title>Araport11: a complete reannotation of the Arabidopsis thaliana reference genome.</title>
        <authorList>
            <person name="Cheng C.Y."/>
            <person name="Krishnakumar V."/>
            <person name="Chan A.P."/>
            <person name="Thibaud-Nissen F."/>
            <person name="Schobel S."/>
            <person name="Town C.D."/>
        </authorList>
    </citation>
    <scope>GENOME REANNOTATION</scope>
    <source>
        <strain>cv. Columbia</strain>
    </source>
</reference>
<reference key="3">
    <citation type="journal article" date="2003" name="Science">
        <title>Empirical analysis of transcriptional activity in the Arabidopsis genome.</title>
        <authorList>
            <person name="Yamada K."/>
            <person name="Lim J."/>
            <person name="Dale J.M."/>
            <person name="Chen H."/>
            <person name="Shinn P."/>
            <person name="Palm C.J."/>
            <person name="Southwick A.M."/>
            <person name="Wu H.C."/>
            <person name="Kim C.J."/>
            <person name="Nguyen M."/>
            <person name="Pham P.K."/>
            <person name="Cheuk R.F."/>
            <person name="Karlin-Newmann G."/>
            <person name="Liu S.X."/>
            <person name="Lam B."/>
            <person name="Sakano H."/>
            <person name="Wu T."/>
            <person name="Yu G."/>
            <person name="Miranda M."/>
            <person name="Quach H.L."/>
            <person name="Tripp M."/>
            <person name="Chang C.H."/>
            <person name="Lee J.M."/>
            <person name="Toriumi M.J."/>
            <person name="Chan M.M."/>
            <person name="Tang C.C."/>
            <person name="Onodera C.S."/>
            <person name="Deng J.M."/>
            <person name="Akiyama K."/>
            <person name="Ansari Y."/>
            <person name="Arakawa T."/>
            <person name="Banh J."/>
            <person name="Banno F."/>
            <person name="Bowser L."/>
            <person name="Brooks S.Y."/>
            <person name="Carninci P."/>
            <person name="Chao Q."/>
            <person name="Choy N."/>
            <person name="Enju A."/>
            <person name="Goldsmith A.D."/>
            <person name="Gurjal M."/>
            <person name="Hansen N.F."/>
            <person name="Hayashizaki Y."/>
            <person name="Johnson-Hopson C."/>
            <person name="Hsuan V.W."/>
            <person name="Iida K."/>
            <person name="Karnes M."/>
            <person name="Khan S."/>
            <person name="Koesema E."/>
            <person name="Ishida J."/>
            <person name="Jiang P.X."/>
            <person name="Jones T."/>
            <person name="Kawai J."/>
            <person name="Kamiya A."/>
            <person name="Meyers C."/>
            <person name="Nakajima M."/>
            <person name="Narusaka M."/>
            <person name="Seki M."/>
            <person name="Sakurai T."/>
            <person name="Satou M."/>
            <person name="Tamse R."/>
            <person name="Vaysberg M."/>
            <person name="Wallender E.K."/>
            <person name="Wong C."/>
            <person name="Yamamura Y."/>
            <person name="Yuan S."/>
            <person name="Shinozaki K."/>
            <person name="Davis R.W."/>
            <person name="Theologis A."/>
            <person name="Ecker J.R."/>
        </authorList>
    </citation>
    <scope>NUCLEOTIDE SEQUENCE [LARGE SCALE MRNA]</scope>
    <source>
        <strain>cv. Columbia</strain>
    </source>
</reference>
<reference key="4">
    <citation type="journal article" date="2004" name="Genes Dev.">
        <title>Nuclear protein phosphatases with Kelch-repeat domains modulate the response to brassinosteroids in Arabidopsis.</title>
        <authorList>
            <person name="Mora-Garcia S."/>
            <person name="Vert G."/>
            <person name="Yin Y."/>
            <person name="Cano-Delgado A."/>
            <person name="Cheong H."/>
            <person name="Chory J."/>
        </authorList>
    </citation>
    <scope>FUNCTION</scope>
    <scope>TISSUE SPECIFICITY</scope>
</reference>
<reference key="5">
    <citation type="journal article" date="2007" name="Trends Plant Sci.">
        <title>Arabidopsis PPP family of serine/threonine phosphatases.</title>
        <authorList>
            <person name="Farkas I."/>
            <person name="Dombradi V."/>
            <person name="Miskei M."/>
            <person name="Szabados L."/>
            <person name="Koncz C."/>
        </authorList>
    </citation>
    <scope>GENE FAMILY</scope>
    <scope>NOMENCLATURE</scope>
</reference>
<reference key="6">
    <citation type="journal article" date="2009" name="J. Proteomics">
        <title>Phosphoproteomic analysis of nuclei-enriched fractions from Arabidopsis thaliana.</title>
        <authorList>
            <person name="Jones A.M.E."/>
            <person name="MacLean D."/>
            <person name="Studholme D.J."/>
            <person name="Serna-Sanz A."/>
            <person name="Andreasson E."/>
            <person name="Rathjen J.P."/>
            <person name="Peck S.C."/>
        </authorList>
    </citation>
    <scope>SUBCELLULAR LOCATION</scope>
    <scope>PHOSPHORYLATION [LARGE SCALE ANALYSIS] AT SER-491</scope>
    <scope>IDENTIFICATION BY MASS SPECTROMETRY [LARGE SCALE ANALYSIS]</scope>
    <source>
        <strain>cv. Columbia</strain>
    </source>
</reference>
<reference key="7">
    <citation type="journal article" date="2009" name="Plant Physiol.">
        <title>Large-scale Arabidopsis phosphoproteome profiling reveals novel chloroplast kinase substrates and phosphorylation networks.</title>
        <authorList>
            <person name="Reiland S."/>
            <person name="Messerli G."/>
            <person name="Baerenfaller K."/>
            <person name="Gerrits B."/>
            <person name="Endler A."/>
            <person name="Grossmann J."/>
            <person name="Gruissem W."/>
            <person name="Baginsky S."/>
        </authorList>
    </citation>
    <scope>PHOSPHORYLATION [LARGE SCALE ANALYSIS] AT SER-491</scope>
    <scope>IDENTIFICATION BY MASS SPECTROMETRY [LARGE SCALE ANALYSIS]</scope>
</reference>
<reference key="8">
    <citation type="journal article" date="2011" name="Mol. Cell">
        <title>The CDG1 kinase mediates brassinosteroid signal transduction from BRI1 receptor kinase to BSU1 phosphatase and GSK3-like kinase BIN2.</title>
        <authorList>
            <person name="Kim T.W."/>
            <person name="Guan S."/>
            <person name="Burlingame A.L."/>
            <person name="Wang Z.Y."/>
        </authorList>
    </citation>
    <scope>INTERACTION WITH CDG1 AND CDL1</scope>
</reference>
<sequence length="881" mass="96146">MGSKPWLHPAPQYKTLETFWDDEDDAPGPRCAHTLTAVAATKTHGPRLILFGGATAIEGGSSSVPGIRLAGVTNTVHSYDILTRKWTRLKPAGEPPSPRAAHAAAAVGTMVVFQGGIGPAGHSTDDLYVLDMTNDKFKWHRVVVQGDGPGPRYGHVMDLVSQRYLVTVTGNDGKRALSDAWALDTAQKPYVWQRLNPDGDRPSARMYASGSARSDGMFLLCGGRDTLGAPLGDAYGLLMHRNGQWEWTLAPGVAPSPRYQHAAVFVGARLHVSGGVLRGGRVIDAEASVAVLDTAAGVWLDRNGQVTSARGSKGQIDQDPSFELMRRCRHGAASVGIRIYVHGGLRGDVLLDDFLVAENSTFQSDISSPLLASDRTQQSSTPRFSYAARPPSGSEPSFSMSEGLSLDENSLEKLTEASAAEAEVASSVWRAAQLGAGTLDEEPSTSDASSPIVESTTDGTANEGDVRLHPRAVVVAKETVGSLGGMVRQLSLDQFQNESRRMVPMNNSDVPQPTKKFTRQKSPQGLHKKVIAALLRPRNWKPPGNRKFFLDSYEVGELCYAAEQIFMHEQTVLQLKAPIKVFGDLHGQFGDLMRLFDEYGFPSTAGDITYIDYLFLGDYVDRGQHSLETITLLLALKIEYPENVHLIRGNHEAADINALFGFRLECIERMGENDGIWAWTRFNQLFNYLPLAALIENKIICMHGGIGRSISTVEQIEKIERPITMDAGSLVLMDLLWSDPTENDSIEGLRPNARGPGLVTFGPDRVTEFCKRNKLQLIIRAHECVMDGFERFAQGQLITLFSATNYCGTANNAGAILVVGRGLVIVPKLIHPLPPPILSPENSPEHSGDDAWMQELNIQRPPTPTRGRPQPDFDRSSLAYI</sequence>
<keyword id="KW-0378">Hydrolase</keyword>
<keyword id="KW-0880">Kelch repeat</keyword>
<keyword id="KW-0464">Manganese</keyword>
<keyword id="KW-0479">Metal-binding</keyword>
<keyword id="KW-0539">Nucleus</keyword>
<keyword id="KW-0597">Phosphoprotein</keyword>
<keyword id="KW-0904">Protein phosphatase</keyword>
<keyword id="KW-1185">Reference proteome</keyword>
<keyword id="KW-0677">Repeat</keyword>
<comment type="function">
    <text evidence="4">Phosphatase involved in elongation process, probably by acting as a regulator of brassinolide signaling.</text>
</comment>
<comment type="catalytic activity">
    <reaction>
        <text>O-phospho-L-seryl-[protein] + H2O = L-seryl-[protein] + phosphate</text>
        <dbReference type="Rhea" id="RHEA:20629"/>
        <dbReference type="Rhea" id="RHEA-COMP:9863"/>
        <dbReference type="Rhea" id="RHEA-COMP:11604"/>
        <dbReference type="ChEBI" id="CHEBI:15377"/>
        <dbReference type="ChEBI" id="CHEBI:29999"/>
        <dbReference type="ChEBI" id="CHEBI:43474"/>
        <dbReference type="ChEBI" id="CHEBI:83421"/>
        <dbReference type="EC" id="3.1.3.16"/>
    </reaction>
</comment>
<comment type="catalytic activity">
    <reaction>
        <text>O-phospho-L-threonyl-[protein] + H2O = L-threonyl-[protein] + phosphate</text>
        <dbReference type="Rhea" id="RHEA:47004"/>
        <dbReference type="Rhea" id="RHEA-COMP:11060"/>
        <dbReference type="Rhea" id="RHEA-COMP:11605"/>
        <dbReference type="ChEBI" id="CHEBI:15377"/>
        <dbReference type="ChEBI" id="CHEBI:30013"/>
        <dbReference type="ChEBI" id="CHEBI:43474"/>
        <dbReference type="ChEBI" id="CHEBI:61977"/>
        <dbReference type="EC" id="3.1.3.16"/>
    </reaction>
</comment>
<comment type="cofactor">
    <cofactor evidence="1">
        <name>Mn(2+)</name>
        <dbReference type="ChEBI" id="CHEBI:29035"/>
    </cofactor>
    <text evidence="1">Binds 2 manganese ions per subunit.</text>
</comment>
<comment type="subunit">
    <text evidence="6">Interacts with CDG1 and CDL1.</text>
</comment>
<comment type="subcellular location">
    <subcellularLocation>
        <location evidence="5">Nucleus</location>
    </subcellularLocation>
</comment>
<comment type="tissue specificity">
    <text evidence="4">Expressed in mature cauline leaves and at the tip of influorescence, including flowers. Expressed at lower level in young tissues relative to older ones.</text>
</comment>
<comment type="similarity">
    <text evidence="7">Belongs to the PPP phosphatase family. BSU subfamily.</text>
</comment>
<comment type="sequence caution" evidence="7">
    <conflict type="erroneous gene model prediction">
        <sequence resource="EMBL-CDS" id="AAC79097"/>
    </conflict>
</comment>
<comment type="sequence caution" evidence="7">
    <conflict type="erroneous gene model prediction">
        <sequence resource="EMBL-CDS" id="CAB77793"/>
    </conflict>
</comment>
<protein>
    <recommendedName>
        <fullName>Serine/threonine-protein phosphatase BSL1</fullName>
        <ecNumber>3.1.3.16</ecNumber>
    </recommendedName>
    <alternativeName>
        <fullName>BSU1-like protein 1</fullName>
    </alternativeName>
</protein>
<gene>
    <name type="primary">BSL1</name>
    <name type="ordered locus">At4g03080</name>
    <name type="ORF">T4I9.4</name>
</gene>
<proteinExistence type="evidence at protein level"/>
<organism>
    <name type="scientific">Arabidopsis thaliana</name>
    <name type="common">Mouse-ear cress</name>
    <dbReference type="NCBI Taxonomy" id="3702"/>
    <lineage>
        <taxon>Eukaryota</taxon>
        <taxon>Viridiplantae</taxon>
        <taxon>Streptophyta</taxon>
        <taxon>Embryophyta</taxon>
        <taxon>Tracheophyta</taxon>
        <taxon>Spermatophyta</taxon>
        <taxon>Magnoliopsida</taxon>
        <taxon>eudicotyledons</taxon>
        <taxon>Gunneridae</taxon>
        <taxon>Pentapetalae</taxon>
        <taxon>rosids</taxon>
        <taxon>malvids</taxon>
        <taxon>Brassicales</taxon>
        <taxon>Brassicaceae</taxon>
        <taxon>Camelineae</taxon>
        <taxon>Arabidopsis</taxon>
    </lineage>
</organism>
<accession>Q8L7U5</accession>
<accession>Q9ZTA4</accession>
<feature type="chain" id="PRO_0000058905" description="Serine/threonine-protein phosphatase BSL1">
    <location>
        <begin position="1"/>
        <end position="881"/>
    </location>
</feature>
<feature type="repeat" description="Kelch 1">
    <location>
        <begin position="60"/>
        <end position="109"/>
    </location>
</feature>
<feature type="repeat" description="Kelch 2">
    <location>
        <begin position="269"/>
        <end position="320"/>
    </location>
</feature>
<feature type="repeat" description="Kelch 3">
    <location>
        <begin position="338"/>
        <end position="385"/>
    </location>
</feature>
<feature type="region of interest" description="Disordered" evidence="3">
    <location>
        <begin position="368"/>
        <end position="407"/>
    </location>
</feature>
<feature type="region of interest" description="Disordered" evidence="3">
    <location>
        <begin position="436"/>
        <end position="464"/>
    </location>
</feature>
<feature type="region of interest" description="Disordered" evidence="3">
    <location>
        <begin position="503"/>
        <end position="522"/>
    </location>
</feature>
<feature type="region of interest" description="Disordered" evidence="3">
    <location>
        <begin position="837"/>
        <end position="881"/>
    </location>
</feature>
<feature type="compositionally biased region" description="Polar residues" evidence="3">
    <location>
        <begin position="374"/>
        <end position="383"/>
    </location>
</feature>
<feature type="compositionally biased region" description="Polar residues" evidence="3">
    <location>
        <begin position="445"/>
        <end position="460"/>
    </location>
</feature>
<feature type="active site" description="Proton donor" evidence="1">
    <location>
        <position position="651"/>
    </location>
</feature>
<feature type="binding site" evidence="1">
    <location>
        <position position="584"/>
    </location>
    <ligand>
        <name>Mn(2+)</name>
        <dbReference type="ChEBI" id="CHEBI:29035"/>
        <label>1</label>
    </ligand>
</feature>
<feature type="binding site" evidence="1">
    <location>
        <position position="586"/>
    </location>
    <ligand>
        <name>Mn(2+)</name>
        <dbReference type="ChEBI" id="CHEBI:29035"/>
        <label>1</label>
    </ligand>
</feature>
<feature type="binding site" evidence="1">
    <location>
        <position position="618"/>
    </location>
    <ligand>
        <name>Mn(2+)</name>
        <dbReference type="ChEBI" id="CHEBI:29035"/>
        <label>1</label>
    </ligand>
</feature>
<feature type="binding site" evidence="1">
    <location>
        <position position="618"/>
    </location>
    <ligand>
        <name>Mn(2+)</name>
        <dbReference type="ChEBI" id="CHEBI:29035"/>
        <label>2</label>
    </ligand>
</feature>
<feature type="binding site" evidence="1">
    <location>
        <position position="650"/>
    </location>
    <ligand>
        <name>Mn(2+)</name>
        <dbReference type="ChEBI" id="CHEBI:29035"/>
        <label>2</label>
    </ligand>
</feature>
<feature type="binding site" evidence="1">
    <location>
        <position position="703"/>
    </location>
    <ligand>
        <name>Mn(2+)</name>
        <dbReference type="ChEBI" id="CHEBI:29035"/>
        <label>2</label>
    </ligand>
</feature>
<feature type="binding site" evidence="1">
    <location>
        <position position="782"/>
    </location>
    <ligand>
        <name>Mn(2+)</name>
        <dbReference type="ChEBI" id="CHEBI:29035"/>
        <label>2</label>
    </ligand>
</feature>
<feature type="modified residue" description="Phosphoserine" evidence="8 9">
    <location>
        <position position="491"/>
    </location>
</feature>
<feature type="modified residue" description="Phosphoserine" evidence="2">
    <location>
        <position position="839"/>
    </location>
</feature>
<feature type="sequence conflict" description="In Ref. 1; AAM83219." evidence="7" ref="1">
    <original>Q</original>
    <variation>P</variation>
    <location>
        <position position="794"/>
    </location>
</feature>
<name>BSL1_ARATH</name>
<evidence type="ECO:0000250" key="1"/>
<evidence type="ECO:0000250" key="2">
    <source>
        <dbReference type="UniProtKB" id="Q9LR78"/>
    </source>
</evidence>
<evidence type="ECO:0000256" key="3">
    <source>
        <dbReference type="SAM" id="MobiDB-lite"/>
    </source>
</evidence>
<evidence type="ECO:0000269" key="4">
    <source>
    </source>
</evidence>
<evidence type="ECO:0000269" key="5">
    <source>
    </source>
</evidence>
<evidence type="ECO:0000269" key="6">
    <source>
    </source>
</evidence>
<evidence type="ECO:0000305" key="7"/>
<evidence type="ECO:0007744" key="8">
    <source>
    </source>
</evidence>
<evidence type="ECO:0007744" key="9">
    <source>
    </source>
</evidence>
<dbReference type="EC" id="3.1.3.16"/>
<dbReference type="EMBL" id="AF069442">
    <property type="protein sequence ID" value="AAC79097.1"/>
    <property type="status" value="ALT_SEQ"/>
    <property type="molecule type" value="Genomic_DNA"/>
</dbReference>
<dbReference type="EMBL" id="AL161496">
    <property type="protein sequence ID" value="CAB77793.1"/>
    <property type="status" value="ALT_SEQ"/>
    <property type="molecule type" value="Genomic_DNA"/>
</dbReference>
<dbReference type="EMBL" id="CP002687">
    <property type="protein sequence ID" value="AEE82268.1"/>
    <property type="molecule type" value="Genomic_DNA"/>
</dbReference>
<dbReference type="EMBL" id="AY126992">
    <property type="protein sequence ID" value="AAM83219.1"/>
    <property type="molecule type" value="mRNA"/>
</dbReference>
<dbReference type="PIR" id="T01385">
    <property type="entry name" value="T01385"/>
</dbReference>
<dbReference type="RefSeq" id="NP_192217.2">
    <property type="nucleotide sequence ID" value="NM_116542.5"/>
</dbReference>
<dbReference type="SMR" id="Q8L7U5"/>
<dbReference type="BioGRID" id="13388">
    <property type="interactions" value="5"/>
</dbReference>
<dbReference type="FunCoup" id="Q8L7U5">
    <property type="interactions" value="663"/>
</dbReference>
<dbReference type="IntAct" id="Q8L7U5">
    <property type="interactions" value="1"/>
</dbReference>
<dbReference type="STRING" id="3702.Q8L7U5"/>
<dbReference type="GlyGen" id="Q8L7U5">
    <property type="glycosylation" value="1 site"/>
</dbReference>
<dbReference type="iPTMnet" id="Q8L7U5"/>
<dbReference type="PaxDb" id="3702-AT4G03080.1"/>
<dbReference type="ProteomicsDB" id="240511"/>
<dbReference type="EnsemblPlants" id="AT4G03080.1">
    <property type="protein sequence ID" value="AT4G03080.1"/>
    <property type="gene ID" value="AT4G03080"/>
</dbReference>
<dbReference type="GeneID" id="828097"/>
<dbReference type="Gramene" id="AT4G03080.1">
    <property type="protein sequence ID" value="AT4G03080.1"/>
    <property type="gene ID" value="AT4G03080"/>
</dbReference>
<dbReference type="KEGG" id="ath:AT4G03080"/>
<dbReference type="Araport" id="AT4G03080"/>
<dbReference type="TAIR" id="AT4G03080">
    <property type="gene designation" value="BSL1"/>
</dbReference>
<dbReference type="eggNOG" id="KOG0374">
    <property type="taxonomic scope" value="Eukaryota"/>
</dbReference>
<dbReference type="eggNOG" id="KOG0379">
    <property type="taxonomic scope" value="Eukaryota"/>
</dbReference>
<dbReference type="HOGENOM" id="CLU_004962_7_1_1"/>
<dbReference type="InParanoid" id="Q8L7U5"/>
<dbReference type="OMA" id="FRHTSWM"/>
<dbReference type="OrthoDB" id="309851at2759"/>
<dbReference type="PRO" id="PR:Q8L7U5"/>
<dbReference type="Proteomes" id="UP000006548">
    <property type="component" value="Chromosome 4"/>
</dbReference>
<dbReference type="ExpressionAtlas" id="Q8L7U5">
    <property type="expression patterns" value="baseline and differential"/>
</dbReference>
<dbReference type="GO" id="GO:0005829">
    <property type="term" value="C:cytosol"/>
    <property type="evidence" value="ECO:0007005"/>
    <property type="project" value="TAIR"/>
</dbReference>
<dbReference type="GO" id="GO:0005634">
    <property type="term" value="C:nucleus"/>
    <property type="evidence" value="ECO:0007669"/>
    <property type="project" value="UniProtKB-SubCell"/>
</dbReference>
<dbReference type="GO" id="GO:0046872">
    <property type="term" value="F:metal ion binding"/>
    <property type="evidence" value="ECO:0007669"/>
    <property type="project" value="UniProtKB-KW"/>
</dbReference>
<dbReference type="GO" id="GO:0004722">
    <property type="term" value="F:protein serine/threonine phosphatase activity"/>
    <property type="evidence" value="ECO:0007669"/>
    <property type="project" value="UniProtKB-EC"/>
</dbReference>
<dbReference type="GO" id="GO:0009742">
    <property type="term" value="P:brassinosteroid mediated signaling pathway"/>
    <property type="evidence" value="ECO:0007669"/>
    <property type="project" value="InterPro"/>
</dbReference>
<dbReference type="CDD" id="cd07419">
    <property type="entry name" value="MPP_Bsu1_C"/>
    <property type="match status" value="1"/>
</dbReference>
<dbReference type="FunFam" id="2.120.10.80:FF:000232">
    <property type="entry name" value="Serine/threonine-protein phosphatase"/>
    <property type="match status" value="1"/>
</dbReference>
<dbReference type="FunFam" id="3.60.21.10:FF:000008">
    <property type="entry name" value="Serine/threonine-protein phosphatase"/>
    <property type="match status" value="1"/>
</dbReference>
<dbReference type="Gene3D" id="3.60.21.10">
    <property type="match status" value="1"/>
</dbReference>
<dbReference type="Gene3D" id="2.120.10.80">
    <property type="entry name" value="Kelch-type beta propeller"/>
    <property type="match status" value="2"/>
</dbReference>
<dbReference type="InterPro" id="IPR004843">
    <property type="entry name" value="Calcineurin-like_PHP_ApaH"/>
</dbReference>
<dbReference type="InterPro" id="IPR015915">
    <property type="entry name" value="Kelch-typ_b-propeller"/>
</dbReference>
<dbReference type="InterPro" id="IPR029052">
    <property type="entry name" value="Metallo-depent_PP-like"/>
</dbReference>
<dbReference type="InterPro" id="IPR041758">
    <property type="entry name" value="MPP_BSL_C"/>
</dbReference>
<dbReference type="InterPro" id="IPR006186">
    <property type="entry name" value="Ser/Thr-sp_prot-phosphatase"/>
</dbReference>
<dbReference type="InterPro" id="IPR012391">
    <property type="entry name" value="Ser/Thr_prot_Pase_BSU1"/>
</dbReference>
<dbReference type="PANTHER" id="PTHR46422">
    <property type="entry name" value="SERINE/THREONINE-PROTEIN PHOSPHATASE BSL3"/>
    <property type="match status" value="1"/>
</dbReference>
<dbReference type="PANTHER" id="PTHR46422:SF6">
    <property type="entry name" value="SERINE_THREONINE-PROTEIN PHOSPHATASE BSL1"/>
    <property type="match status" value="1"/>
</dbReference>
<dbReference type="Pfam" id="PF24681">
    <property type="entry name" value="Kelch_KLHDC2_KLHL20_DRC7"/>
    <property type="match status" value="1"/>
</dbReference>
<dbReference type="Pfam" id="PF00149">
    <property type="entry name" value="Metallophos"/>
    <property type="match status" value="1"/>
</dbReference>
<dbReference type="PIRSF" id="PIRSF036363">
    <property type="entry name" value="PPP_BSU1"/>
    <property type="match status" value="1"/>
</dbReference>
<dbReference type="PRINTS" id="PR00114">
    <property type="entry name" value="STPHPHTASE"/>
</dbReference>
<dbReference type="SMART" id="SM00156">
    <property type="entry name" value="PP2Ac"/>
    <property type="match status" value="1"/>
</dbReference>
<dbReference type="SUPFAM" id="SSF117281">
    <property type="entry name" value="Kelch motif"/>
    <property type="match status" value="1"/>
</dbReference>
<dbReference type="SUPFAM" id="SSF56300">
    <property type="entry name" value="Metallo-dependent phosphatases"/>
    <property type="match status" value="1"/>
</dbReference>
<dbReference type="PROSITE" id="PS00125">
    <property type="entry name" value="SER_THR_PHOSPHATASE"/>
    <property type="match status" value="1"/>
</dbReference>